<feature type="chain" id="PRO_0000235624" description="5'-nucleotidase SurE">
    <location>
        <begin position="1"/>
        <end position="246"/>
    </location>
</feature>
<feature type="binding site" evidence="1">
    <location>
        <position position="8"/>
    </location>
    <ligand>
        <name>a divalent metal cation</name>
        <dbReference type="ChEBI" id="CHEBI:60240"/>
    </ligand>
</feature>
<feature type="binding site" evidence="1">
    <location>
        <position position="9"/>
    </location>
    <ligand>
        <name>a divalent metal cation</name>
        <dbReference type="ChEBI" id="CHEBI:60240"/>
    </ligand>
</feature>
<feature type="binding site" evidence="1">
    <location>
        <position position="39"/>
    </location>
    <ligand>
        <name>a divalent metal cation</name>
        <dbReference type="ChEBI" id="CHEBI:60240"/>
    </ligand>
</feature>
<feature type="binding site" evidence="1">
    <location>
        <position position="91"/>
    </location>
    <ligand>
        <name>a divalent metal cation</name>
        <dbReference type="ChEBI" id="CHEBI:60240"/>
    </ligand>
</feature>
<organism>
    <name type="scientific">Mannheimia succiniciproducens (strain KCTC 0769BP / MBEL55E)</name>
    <dbReference type="NCBI Taxonomy" id="221988"/>
    <lineage>
        <taxon>Bacteria</taxon>
        <taxon>Pseudomonadati</taxon>
        <taxon>Pseudomonadota</taxon>
        <taxon>Gammaproteobacteria</taxon>
        <taxon>Pasteurellales</taxon>
        <taxon>Pasteurellaceae</taxon>
        <taxon>Basfia</taxon>
    </lineage>
</organism>
<sequence>MNILLSNDDGYHAEGIQILARELRKFADVTIVAPDRNRSAASGSLTLVEPLRPRHLDDGDYCVNGTPADCVHLALNGFLSGRMDLVVSGINAGVNLGDDVIYSGTVAAALEGRHLGLPSIAVSLDGRRYYETAARVVCDLIPKLHTRLLNPREIININVPDIPYDQIKGIKVCRLGHRAASAEVIKQQDPRGESIYWIGPAALPEDDEEGTDFHAVNNGYVAITPIQVDMTSYNSMSALQDWLESE</sequence>
<gene>
    <name evidence="1" type="primary">surE</name>
    <name type="ordered locus">MS2272</name>
</gene>
<dbReference type="EC" id="3.1.3.5" evidence="1"/>
<dbReference type="EMBL" id="AE016827">
    <property type="protein sequence ID" value="AAU38879.1"/>
    <property type="status" value="ALT_INIT"/>
    <property type="molecule type" value="Genomic_DNA"/>
</dbReference>
<dbReference type="RefSeq" id="WP_041640097.1">
    <property type="nucleotide sequence ID" value="NC_006300.1"/>
</dbReference>
<dbReference type="SMR" id="Q65Q81"/>
<dbReference type="STRING" id="221988.MS2272"/>
<dbReference type="KEGG" id="msu:MS2272"/>
<dbReference type="eggNOG" id="COG0496">
    <property type="taxonomic scope" value="Bacteria"/>
</dbReference>
<dbReference type="HOGENOM" id="CLU_045192_1_2_6"/>
<dbReference type="OrthoDB" id="9780815at2"/>
<dbReference type="Proteomes" id="UP000000607">
    <property type="component" value="Chromosome"/>
</dbReference>
<dbReference type="GO" id="GO:0005737">
    <property type="term" value="C:cytoplasm"/>
    <property type="evidence" value="ECO:0007669"/>
    <property type="project" value="UniProtKB-SubCell"/>
</dbReference>
<dbReference type="GO" id="GO:0008254">
    <property type="term" value="F:3'-nucleotidase activity"/>
    <property type="evidence" value="ECO:0007669"/>
    <property type="project" value="TreeGrafter"/>
</dbReference>
<dbReference type="GO" id="GO:0008253">
    <property type="term" value="F:5'-nucleotidase activity"/>
    <property type="evidence" value="ECO:0007669"/>
    <property type="project" value="UniProtKB-UniRule"/>
</dbReference>
<dbReference type="GO" id="GO:0004309">
    <property type="term" value="F:exopolyphosphatase activity"/>
    <property type="evidence" value="ECO:0007669"/>
    <property type="project" value="TreeGrafter"/>
</dbReference>
<dbReference type="GO" id="GO:0046872">
    <property type="term" value="F:metal ion binding"/>
    <property type="evidence" value="ECO:0007669"/>
    <property type="project" value="UniProtKB-UniRule"/>
</dbReference>
<dbReference type="GO" id="GO:0000166">
    <property type="term" value="F:nucleotide binding"/>
    <property type="evidence" value="ECO:0007669"/>
    <property type="project" value="UniProtKB-KW"/>
</dbReference>
<dbReference type="FunFam" id="3.40.1210.10:FF:000001">
    <property type="entry name" value="5'/3'-nucleotidase SurE"/>
    <property type="match status" value="1"/>
</dbReference>
<dbReference type="Gene3D" id="3.40.1210.10">
    <property type="entry name" value="Survival protein SurE-like phosphatase/nucleotidase"/>
    <property type="match status" value="1"/>
</dbReference>
<dbReference type="HAMAP" id="MF_00060">
    <property type="entry name" value="SurE"/>
    <property type="match status" value="1"/>
</dbReference>
<dbReference type="InterPro" id="IPR030048">
    <property type="entry name" value="SurE"/>
</dbReference>
<dbReference type="InterPro" id="IPR002828">
    <property type="entry name" value="SurE-like_Pase/nucleotidase"/>
</dbReference>
<dbReference type="InterPro" id="IPR036523">
    <property type="entry name" value="SurE-like_sf"/>
</dbReference>
<dbReference type="NCBIfam" id="NF001489">
    <property type="entry name" value="PRK00346.1-3"/>
    <property type="match status" value="1"/>
</dbReference>
<dbReference type="NCBIfam" id="NF001490">
    <property type="entry name" value="PRK00346.1-4"/>
    <property type="match status" value="1"/>
</dbReference>
<dbReference type="NCBIfam" id="TIGR00087">
    <property type="entry name" value="surE"/>
    <property type="match status" value="1"/>
</dbReference>
<dbReference type="PANTHER" id="PTHR30457">
    <property type="entry name" value="5'-NUCLEOTIDASE SURE"/>
    <property type="match status" value="1"/>
</dbReference>
<dbReference type="PANTHER" id="PTHR30457:SF12">
    <property type="entry name" value="5'_3'-NUCLEOTIDASE SURE"/>
    <property type="match status" value="1"/>
</dbReference>
<dbReference type="Pfam" id="PF01975">
    <property type="entry name" value="SurE"/>
    <property type="match status" value="1"/>
</dbReference>
<dbReference type="SUPFAM" id="SSF64167">
    <property type="entry name" value="SurE-like"/>
    <property type="match status" value="1"/>
</dbReference>
<keyword id="KW-0963">Cytoplasm</keyword>
<keyword id="KW-0378">Hydrolase</keyword>
<keyword id="KW-0479">Metal-binding</keyword>
<keyword id="KW-0547">Nucleotide-binding</keyword>
<evidence type="ECO:0000255" key="1">
    <source>
        <dbReference type="HAMAP-Rule" id="MF_00060"/>
    </source>
</evidence>
<evidence type="ECO:0000305" key="2"/>
<reference key="1">
    <citation type="journal article" date="2004" name="Nat. Biotechnol.">
        <title>The genome sequence of the capnophilic rumen bacterium Mannheimia succiniciproducens.</title>
        <authorList>
            <person name="Hong S.H."/>
            <person name="Kim J.S."/>
            <person name="Lee S.Y."/>
            <person name="In Y.H."/>
            <person name="Choi S.S."/>
            <person name="Rih J.-K."/>
            <person name="Kim C.H."/>
            <person name="Jeong H."/>
            <person name="Hur C.G."/>
            <person name="Kim J.J."/>
        </authorList>
    </citation>
    <scope>NUCLEOTIDE SEQUENCE [LARGE SCALE GENOMIC DNA]</scope>
    <source>
        <strain>KCTC 0769BP / MBEL55E</strain>
    </source>
</reference>
<proteinExistence type="inferred from homology"/>
<accession>Q65Q81</accession>
<name>SURE_MANSM</name>
<comment type="function">
    <text evidence="1">Nucleotidase that shows phosphatase activity on nucleoside 5'-monophosphates.</text>
</comment>
<comment type="catalytic activity">
    <reaction evidence="1">
        <text>a ribonucleoside 5'-phosphate + H2O = a ribonucleoside + phosphate</text>
        <dbReference type="Rhea" id="RHEA:12484"/>
        <dbReference type="ChEBI" id="CHEBI:15377"/>
        <dbReference type="ChEBI" id="CHEBI:18254"/>
        <dbReference type="ChEBI" id="CHEBI:43474"/>
        <dbReference type="ChEBI" id="CHEBI:58043"/>
        <dbReference type="EC" id="3.1.3.5"/>
    </reaction>
</comment>
<comment type="cofactor">
    <cofactor evidence="1">
        <name>a divalent metal cation</name>
        <dbReference type="ChEBI" id="CHEBI:60240"/>
    </cofactor>
    <text evidence="1">Binds 1 divalent metal cation per subunit.</text>
</comment>
<comment type="subcellular location">
    <subcellularLocation>
        <location evidence="1">Cytoplasm</location>
    </subcellularLocation>
</comment>
<comment type="similarity">
    <text evidence="1">Belongs to the SurE nucleotidase family.</text>
</comment>
<comment type="sequence caution" evidence="2">
    <conflict type="erroneous initiation">
        <sequence resource="EMBL-CDS" id="AAU38879"/>
    </conflict>
</comment>
<protein>
    <recommendedName>
        <fullName evidence="1">5'-nucleotidase SurE</fullName>
        <ecNumber evidence="1">3.1.3.5</ecNumber>
    </recommendedName>
    <alternativeName>
        <fullName evidence="1">Nucleoside 5'-monophosphate phosphohydrolase</fullName>
    </alternativeName>
</protein>